<evidence type="ECO:0000250" key="1">
    <source>
        <dbReference type="UniProtKB" id="Q8IUD6"/>
    </source>
</evidence>
<evidence type="ECO:0000255" key="2"/>
<evidence type="ECO:0000255" key="3">
    <source>
        <dbReference type="PROSITE-ProRule" id="PRU00175"/>
    </source>
</evidence>
<evidence type="ECO:0000255" key="4">
    <source>
        <dbReference type="PROSITE-ProRule" id="PRU00548"/>
    </source>
</evidence>
<evidence type="ECO:0000305" key="5"/>
<evidence type="ECO:0000312" key="6">
    <source>
        <dbReference type="RGD" id="1305252"/>
    </source>
</evidence>
<protein>
    <recommendedName>
        <fullName evidence="5">E3 ubiquitin-protein ligase RNF135</fullName>
        <ecNumber evidence="1">2.3.2.27</ecNumber>
    </recommendedName>
    <alternativeName>
        <fullName>RING finger protein 135</fullName>
    </alternativeName>
    <alternativeName>
        <fullName evidence="5">RING-type E3 ubiquitin transferase RNF135</fullName>
    </alternativeName>
</protein>
<gene>
    <name evidence="6" type="primary">Rnf135</name>
</gene>
<reference key="1">
    <citation type="journal article" date="2004" name="Genome Res.">
        <title>The status, quality, and expansion of the NIH full-length cDNA project: the Mammalian Gene Collection (MGC).</title>
        <authorList>
            <consortium name="The MGC Project Team"/>
        </authorList>
    </citation>
    <scope>NUCLEOTIDE SEQUENCE [LARGE SCALE MRNA]</scope>
    <source>
        <tissue>Brain</tissue>
    </source>
</reference>
<proteinExistence type="evidence at transcript level"/>
<feature type="chain" id="PRO_0000280559" description="E3 ubiquitin-protein ligase RNF135">
    <location>
        <begin position="1"/>
        <end position="415"/>
    </location>
</feature>
<feature type="domain" description="B30.2/SPRY" evidence="4">
    <location>
        <begin position="228"/>
        <end position="415"/>
    </location>
</feature>
<feature type="zinc finger region" description="RING-type" evidence="3">
    <location>
        <begin position="21"/>
        <end position="67"/>
    </location>
</feature>
<feature type="coiled-coil region" evidence="2">
    <location>
        <begin position="181"/>
        <end position="206"/>
    </location>
</feature>
<keyword id="KW-0175">Coiled coil</keyword>
<keyword id="KW-0963">Cytoplasm</keyword>
<keyword id="KW-0391">Immunity</keyword>
<keyword id="KW-0399">Innate immunity</keyword>
<keyword id="KW-0479">Metal-binding</keyword>
<keyword id="KW-1185">Reference proteome</keyword>
<keyword id="KW-0808">Transferase</keyword>
<keyword id="KW-0833">Ubl conjugation pathway</keyword>
<keyword id="KW-0862">Zinc</keyword>
<keyword id="KW-0863">Zinc-finger</keyword>
<dbReference type="EC" id="2.3.2.27" evidence="1"/>
<dbReference type="EMBL" id="BC087718">
    <property type="protein sequence ID" value="AAH87718.1"/>
    <property type="molecule type" value="mRNA"/>
</dbReference>
<dbReference type="RefSeq" id="NP_001012010.1">
    <property type="nucleotide sequence ID" value="NM_001012010.2"/>
</dbReference>
<dbReference type="SMR" id="Q5M929"/>
<dbReference type="FunCoup" id="Q5M929">
    <property type="interactions" value="2911"/>
</dbReference>
<dbReference type="GlyGen" id="Q5M929">
    <property type="glycosylation" value="1 site"/>
</dbReference>
<dbReference type="PhosphoSitePlus" id="Q5M929"/>
<dbReference type="PaxDb" id="10116-ENSRNOP00000005428"/>
<dbReference type="Ensembl" id="ENSRNOT00000113280.1">
    <property type="protein sequence ID" value="ENSRNOP00000088068.1"/>
    <property type="gene ID" value="ENSRNOG00000004093.8"/>
</dbReference>
<dbReference type="GeneID" id="303350"/>
<dbReference type="KEGG" id="rno:303350"/>
<dbReference type="AGR" id="RGD:1305252"/>
<dbReference type="CTD" id="84282"/>
<dbReference type="RGD" id="1305252">
    <property type="gene designation" value="Rnf135"/>
</dbReference>
<dbReference type="eggNOG" id="KOG2177">
    <property type="taxonomic scope" value="Eukaryota"/>
</dbReference>
<dbReference type="GeneTree" id="ENSGT00940000155641"/>
<dbReference type="HOGENOM" id="CLU_032372_2_0_1"/>
<dbReference type="InParanoid" id="Q5M929"/>
<dbReference type="OMA" id="RCSHWAV"/>
<dbReference type="OrthoDB" id="78674at9989"/>
<dbReference type="UniPathway" id="UPA00143"/>
<dbReference type="PRO" id="PR:Q5M929"/>
<dbReference type="Proteomes" id="UP000002494">
    <property type="component" value="Chromosome 10"/>
</dbReference>
<dbReference type="GO" id="GO:0005737">
    <property type="term" value="C:cytoplasm"/>
    <property type="evidence" value="ECO:0000250"/>
    <property type="project" value="UniProtKB"/>
</dbReference>
<dbReference type="GO" id="GO:0010494">
    <property type="term" value="C:cytoplasmic stress granule"/>
    <property type="evidence" value="ECO:0000250"/>
    <property type="project" value="UniProtKB"/>
</dbReference>
<dbReference type="GO" id="GO:1990904">
    <property type="term" value="C:ribonucleoprotein complex"/>
    <property type="evidence" value="ECO:0000250"/>
    <property type="project" value="UniProtKB"/>
</dbReference>
<dbReference type="GO" id="GO:0042802">
    <property type="term" value="F:identical protein binding"/>
    <property type="evidence" value="ECO:0000266"/>
    <property type="project" value="RGD"/>
</dbReference>
<dbReference type="GO" id="GO:0043021">
    <property type="term" value="F:ribonucleoprotein complex binding"/>
    <property type="evidence" value="ECO:0000250"/>
    <property type="project" value="UniProtKB"/>
</dbReference>
<dbReference type="GO" id="GO:0039552">
    <property type="term" value="F:RIG-I binding"/>
    <property type="evidence" value="ECO:0000250"/>
    <property type="project" value="UniProtKB"/>
</dbReference>
<dbReference type="GO" id="GO:0061630">
    <property type="term" value="F:ubiquitin protein ligase activity"/>
    <property type="evidence" value="ECO:0000250"/>
    <property type="project" value="UniProtKB"/>
</dbReference>
<dbReference type="GO" id="GO:0004842">
    <property type="term" value="F:ubiquitin-protein transferase activity"/>
    <property type="evidence" value="ECO:0000250"/>
    <property type="project" value="UniProtKB"/>
</dbReference>
<dbReference type="GO" id="GO:0008270">
    <property type="term" value="F:zinc ion binding"/>
    <property type="evidence" value="ECO:0007669"/>
    <property type="project" value="UniProtKB-KW"/>
</dbReference>
<dbReference type="GO" id="GO:0140374">
    <property type="term" value="P:antiviral innate immune response"/>
    <property type="evidence" value="ECO:0000250"/>
    <property type="project" value="UniProtKB"/>
</dbReference>
<dbReference type="GO" id="GO:0010994">
    <property type="term" value="P:free ubiquitin chain polymerization"/>
    <property type="evidence" value="ECO:0000250"/>
    <property type="project" value="UniProtKB"/>
</dbReference>
<dbReference type="GO" id="GO:0032728">
    <property type="term" value="P:positive regulation of interferon-beta production"/>
    <property type="evidence" value="ECO:0000250"/>
    <property type="project" value="UniProtKB"/>
</dbReference>
<dbReference type="GO" id="GO:0051260">
    <property type="term" value="P:protein homooligomerization"/>
    <property type="evidence" value="ECO:0000250"/>
    <property type="project" value="UniProtKB"/>
</dbReference>
<dbReference type="GO" id="GO:0070534">
    <property type="term" value="P:protein K63-linked ubiquitination"/>
    <property type="evidence" value="ECO:0000250"/>
    <property type="project" value="UniProtKB"/>
</dbReference>
<dbReference type="GO" id="GO:0000209">
    <property type="term" value="P:protein polyubiquitination"/>
    <property type="evidence" value="ECO:0000250"/>
    <property type="project" value="UniProtKB"/>
</dbReference>
<dbReference type="GO" id="GO:0016567">
    <property type="term" value="P:protein ubiquitination"/>
    <property type="evidence" value="ECO:0000250"/>
    <property type="project" value="UniProtKB"/>
</dbReference>
<dbReference type="GO" id="GO:0045088">
    <property type="term" value="P:regulation of innate immune response"/>
    <property type="evidence" value="ECO:0000250"/>
    <property type="project" value="UniProtKB"/>
</dbReference>
<dbReference type="GO" id="GO:0039529">
    <property type="term" value="P:RIG-I signaling pathway"/>
    <property type="evidence" value="ECO:0000250"/>
    <property type="project" value="UniProtKB"/>
</dbReference>
<dbReference type="CDD" id="cd12902">
    <property type="entry name" value="SPRY_PRY_RNF135"/>
    <property type="match status" value="1"/>
</dbReference>
<dbReference type="FunFam" id="2.60.120.920:FF:000059">
    <property type="entry name" value="E3 ubiquitin-protein ligase RNF135"/>
    <property type="match status" value="1"/>
</dbReference>
<dbReference type="FunFam" id="3.30.40.10:FF:000545">
    <property type="entry name" value="E3 ubiquitin-protein ligase RNF135"/>
    <property type="match status" value="1"/>
</dbReference>
<dbReference type="Gene3D" id="2.60.120.920">
    <property type="match status" value="1"/>
</dbReference>
<dbReference type="Gene3D" id="3.30.40.10">
    <property type="entry name" value="Zinc/RING finger domain, C3HC4 (zinc finger)"/>
    <property type="match status" value="1"/>
</dbReference>
<dbReference type="InterPro" id="IPR001870">
    <property type="entry name" value="B30.2/SPRY"/>
</dbReference>
<dbReference type="InterPro" id="IPR043136">
    <property type="entry name" value="B30.2/SPRY_sf"/>
</dbReference>
<dbReference type="InterPro" id="IPR003879">
    <property type="entry name" value="Butyrophylin_SPRY"/>
</dbReference>
<dbReference type="InterPro" id="IPR013320">
    <property type="entry name" value="ConA-like_dom_sf"/>
</dbReference>
<dbReference type="InterPro" id="IPR051051">
    <property type="entry name" value="E3_ubiq-ligase_TRIM/RNF"/>
</dbReference>
<dbReference type="InterPro" id="IPR006574">
    <property type="entry name" value="PRY"/>
</dbReference>
<dbReference type="InterPro" id="IPR042723">
    <property type="entry name" value="RNF135_SPRY_PRY_dom"/>
</dbReference>
<dbReference type="InterPro" id="IPR003877">
    <property type="entry name" value="SPRY_dom"/>
</dbReference>
<dbReference type="InterPro" id="IPR001841">
    <property type="entry name" value="Znf_RING"/>
</dbReference>
<dbReference type="InterPro" id="IPR013083">
    <property type="entry name" value="Znf_RING/FYVE/PHD"/>
</dbReference>
<dbReference type="InterPro" id="IPR017907">
    <property type="entry name" value="Znf_RING_CS"/>
</dbReference>
<dbReference type="PANTHER" id="PTHR25465">
    <property type="entry name" value="B-BOX DOMAIN CONTAINING"/>
    <property type="match status" value="1"/>
</dbReference>
<dbReference type="PANTHER" id="PTHR25465:SF41">
    <property type="entry name" value="E3 UBIQUITIN-PROTEIN LIGASE RNF135"/>
    <property type="match status" value="1"/>
</dbReference>
<dbReference type="Pfam" id="PF00622">
    <property type="entry name" value="SPRY"/>
    <property type="match status" value="1"/>
</dbReference>
<dbReference type="Pfam" id="PF15227">
    <property type="entry name" value="zf-C3HC4_4"/>
    <property type="match status" value="1"/>
</dbReference>
<dbReference type="PRINTS" id="PR01407">
    <property type="entry name" value="BUTYPHLNCDUF"/>
</dbReference>
<dbReference type="SMART" id="SM00589">
    <property type="entry name" value="PRY"/>
    <property type="match status" value="1"/>
</dbReference>
<dbReference type="SMART" id="SM00184">
    <property type="entry name" value="RING"/>
    <property type="match status" value="1"/>
</dbReference>
<dbReference type="SMART" id="SM00449">
    <property type="entry name" value="SPRY"/>
    <property type="match status" value="1"/>
</dbReference>
<dbReference type="SUPFAM" id="SSF49899">
    <property type="entry name" value="Concanavalin A-like lectins/glucanases"/>
    <property type="match status" value="1"/>
</dbReference>
<dbReference type="SUPFAM" id="SSF57850">
    <property type="entry name" value="RING/U-box"/>
    <property type="match status" value="1"/>
</dbReference>
<dbReference type="PROSITE" id="PS50188">
    <property type="entry name" value="B302_SPRY"/>
    <property type="match status" value="1"/>
</dbReference>
<dbReference type="PROSITE" id="PS00518">
    <property type="entry name" value="ZF_RING_1"/>
    <property type="match status" value="1"/>
</dbReference>
<dbReference type="PROSITE" id="PS50089">
    <property type="entry name" value="ZF_RING_2"/>
    <property type="match status" value="1"/>
</dbReference>
<accession>Q5M929</accession>
<sequence>MAAACPGTAVPVWLSEEDLSCIICQGLLDWPTTLPCGHSFCLQCLKDLWVSKRAGVDSCPWACPICRKGPSAKPVLHKNPLLQDLVDKYRQAALELEAGPEPAPVPRSLCTPTPPQVTVQKSTTQVVQELTELVGQLVDIVKSLQTQRPSLASGLDNALGILHMDSSSEEEYPLDSPKLVTFSASQKKIQEILRDLEKIQETLQGSVTGNEAPKKQVEEMASSVGLLPDQRYPVSRKASQFSLWAISPTFDLRSLSCNLEVSNNCRMVTVSRALQPYHWSSERFSISQVLCSQAFSSGQKYWEVDTRNCSHWAVGVASWGMKRDKMLGRTMDSWCIEWRGPSQFSAWAMMKKTDLSSGPPEVVGVWLDLELGKLAFYSVADQERPLYECEVSSSSPLHPAFWLYGLTPGNYLEIL</sequence>
<organism>
    <name type="scientific">Rattus norvegicus</name>
    <name type="common">Rat</name>
    <dbReference type="NCBI Taxonomy" id="10116"/>
    <lineage>
        <taxon>Eukaryota</taxon>
        <taxon>Metazoa</taxon>
        <taxon>Chordata</taxon>
        <taxon>Craniata</taxon>
        <taxon>Vertebrata</taxon>
        <taxon>Euteleostomi</taxon>
        <taxon>Mammalia</taxon>
        <taxon>Eutheria</taxon>
        <taxon>Euarchontoglires</taxon>
        <taxon>Glires</taxon>
        <taxon>Rodentia</taxon>
        <taxon>Myomorpha</taxon>
        <taxon>Muroidea</taxon>
        <taxon>Muridae</taxon>
        <taxon>Murinae</taxon>
        <taxon>Rattus</taxon>
    </lineage>
</organism>
<comment type="function">
    <text evidence="1">E2-dependent E3 ubiquitin-protein ligase that functions as a RIGI coreceptor in the sensing of viral RNAs in cell cytoplasm and the activation of the antiviral innate immune response. Together with the UBE2D3, UBE2N and UB2V1 E2 ligases, catalyzes the 'Lys-63'-linked polyubiquitination of RIGI oligomerized on viral RNAs, an essential step in the activation of the RIG-I signaling pathway. Through a ubiquitin-independent parallel mechanism, which consists in bridging RIGI filaments forming on longer viral RNAs, further activates the RIG-I signaling pathway. This second mechanism that synergizes with the ubiquitin-dependent one would thereby allow an RNA length-dependent regulation of the RIG-I signaling pathway. Associated with the E2 ligase UBE2N, also constitutively synthesizes unanchored 'Lys-63'-linked polyubiquitin chains that may also activate the RIG-I signaling pathway.</text>
</comment>
<comment type="catalytic activity">
    <reaction evidence="1">
        <text>S-ubiquitinyl-[E2 ubiquitin-conjugating enzyme]-L-cysteine + [acceptor protein]-L-lysine = [E2 ubiquitin-conjugating enzyme]-L-cysteine + N(6)-ubiquitinyl-[acceptor protein]-L-lysine.</text>
        <dbReference type="EC" id="2.3.2.27"/>
    </reaction>
</comment>
<comment type="pathway">
    <text evidence="1">Protein modification; protein ubiquitination.</text>
</comment>
<comment type="subunit">
    <text evidence="1">Homodimer. Interacts (homodimer) with RIGI (double-stranded RNA-bound oligomeric form); involved in both RIGI ubiquitination, oligomerization into filaments associated with viral RNAs and the bridging of these filaments. Interacts with UBE2D3 and UBE2N; E2 ubiquitin ligases involved in RNF135-mediated ubiquitination of RIGI and activation of the RIG-I signaling pathway. Interacts with PCBP2.</text>
</comment>
<comment type="subcellular location">
    <subcellularLocation>
        <location evidence="1">Cytoplasm</location>
    </subcellularLocation>
    <subcellularLocation>
        <location evidence="1">Cytoplasm</location>
        <location evidence="1">Stress granule</location>
    </subcellularLocation>
</comment>
<comment type="domain">
    <text evidence="1">The B30.2/SPRY domain mediates the interaction with the substrate RIGI.</text>
</comment>
<comment type="domain">
    <text evidence="1">The coiled-coil domains mediate homodimerization and the bridging of viral RNA-associated RIGI filaments.</text>
</comment>
<name>RN135_RAT</name>